<sequence length="97" mass="11155">MKIEHYIILMVILVGFVTMPLLIPTIKTTQTYSIFNTQENGCSNFLKLMHNSNTIKPLIYPYSNLRDNSILFIIGPDVEFSEDEGHLLRNYVYAGNI</sequence>
<accession>P25769</accession>
<organism>
    <name type="scientific">Methanothermococcus thermolithotrophicus</name>
    <name type="common">Methanococcus thermolithotrophicus</name>
    <dbReference type="NCBI Taxonomy" id="2186"/>
    <lineage>
        <taxon>Archaea</taxon>
        <taxon>Methanobacteriati</taxon>
        <taxon>Methanobacteriota</taxon>
        <taxon>Methanomada group</taxon>
        <taxon>Methanococci</taxon>
        <taxon>Methanococcales</taxon>
        <taxon>Methanococcaceae</taxon>
        <taxon>Methanothermococcus</taxon>
    </lineage>
</organism>
<dbReference type="EMBL" id="X13830">
    <property type="protein sequence ID" value="CAA32054.1"/>
    <property type="molecule type" value="Genomic_DNA"/>
</dbReference>
<dbReference type="PIR" id="S06983">
    <property type="entry name" value="S06983"/>
</dbReference>
<reference key="1">
    <citation type="journal article" date="1989" name="Mol. Microbiol.">
        <title>Primary structure, functional organization and expression of nitrogenase structural genes of the thermophilic archaebacterium Methanococcus thermolithotrophicus.</title>
        <authorList>
            <person name="Souillard N."/>
            <person name="Sibold L."/>
        </authorList>
    </citation>
    <scope>NUCLEOTIDE SEQUENCE [GENOMIC DNA]</scope>
</reference>
<protein>
    <recommendedName>
        <fullName>Uncharacterized protein in nifH1 5'region</fullName>
    </recommendedName>
</protein>
<name>YNI3_METTL</name>
<feature type="chain" id="PRO_0000066331" description="Uncharacterized protein in nifH1 5'region">
    <location>
        <begin position="1"/>
        <end position="97" status="greater than"/>
    </location>
</feature>
<feature type="non-terminal residue">
    <location>
        <position position="97"/>
    </location>
</feature>
<proteinExistence type="predicted"/>